<organism>
    <name type="scientific">Mycobacterium phage L5</name>
    <name type="common">Mycobacteriophage L5</name>
    <dbReference type="NCBI Taxonomy" id="31757"/>
    <lineage>
        <taxon>Viruses</taxon>
        <taxon>Duplodnaviria</taxon>
        <taxon>Heunggongvirae</taxon>
        <taxon>Uroviricota</taxon>
        <taxon>Caudoviricetes</taxon>
        <taxon>Fromanvirus</taxon>
    </lineage>
</organism>
<accession>Q05228</accession>
<feature type="chain" id="PRO_0000164733" description="Gene 22 protein">
    <location>
        <begin position="1"/>
        <end position="139"/>
    </location>
</feature>
<reference key="1">
    <citation type="journal article" date="1993" name="Mol. Microbiol.">
        <title>DNA sequence, structure and gene expression of mycobacteriophage L5: a phage system for mycobacterial genetics.</title>
        <authorList>
            <person name="Hatfull G.F."/>
            <person name="Sarkis G.J."/>
        </authorList>
    </citation>
    <scope>NUCLEOTIDE SEQUENCE [LARGE SCALE GENOMIC DNA]</scope>
</reference>
<organismHost>
    <name type="scientific">Mycobacterium</name>
    <dbReference type="NCBI Taxonomy" id="1763"/>
</organismHost>
<keyword id="KW-1185">Reference proteome</keyword>
<sequence>MARMPRVQAVAAPILRSDPRLEGVTVTTWVPDVDFREFPMINLRRIGGTRNPNAPTLHTLPVVEMTAYTRDGLIETEELYETALEVLYDAVENGTQTPAGYLTSIFETMGATQFSSLYQDSWRIQGLIRLGVRRPRTTL</sequence>
<protein>
    <recommendedName>
        <fullName>Gene 22 protein</fullName>
    </recommendedName>
    <alternativeName>
        <fullName>Gp22</fullName>
    </alternativeName>
</protein>
<name>VG22_BPML5</name>
<gene>
    <name type="primary">22</name>
</gene>
<proteinExistence type="predicted"/>
<dbReference type="EMBL" id="Z18946">
    <property type="protein sequence ID" value="CAA79398.1"/>
    <property type="molecule type" value="Genomic_DNA"/>
</dbReference>
<dbReference type="PIR" id="S30967">
    <property type="entry name" value="S30967"/>
</dbReference>
<dbReference type="RefSeq" id="NP_039686.1">
    <property type="nucleotide sequence ID" value="NC_001335.1"/>
</dbReference>
<dbReference type="SMR" id="Q05228"/>
<dbReference type="GeneID" id="2942946"/>
<dbReference type="KEGG" id="vg:2942946"/>
<dbReference type="OrthoDB" id="15306at10239"/>
<dbReference type="Proteomes" id="UP000002123">
    <property type="component" value="Genome"/>
</dbReference>